<proteinExistence type="inferred from homology"/>
<keyword id="KW-0472">Membrane</keyword>
<keyword id="KW-0496">Mitochondrion</keyword>
<keyword id="KW-1000">Mitochondrion outer membrane</keyword>
<keyword id="KW-1185">Reference proteome</keyword>
<keyword id="KW-0812">Transmembrane</keyword>
<keyword id="KW-1134">Transmembrane beta strand</keyword>
<protein>
    <recommendedName>
        <fullName evidence="1">Mitochondrial distribution and morphology protein 10</fullName>
    </recommendedName>
    <alternativeName>
        <fullName evidence="1">Mitochondrial inheritance component MDM10</fullName>
    </alternativeName>
</protein>
<name>MDM10_AJECN</name>
<gene>
    <name evidence="1" type="primary">MDM10</name>
    <name type="ORF">HCAG_02501</name>
</gene>
<reference key="1">
    <citation type="journal article" date="2009" name="Genome Res.">
        <title>Comparative genomic analyses of the human fungal pathogens Coccidioides and their relatives.</title>
        <authorList>
            <person name="Sharpton T.J."/>
            <person name="Stajich J.E."/>
            <person name="Rounsley S.D."/>
            <person name="Gardner M.J."/>
            <person name="Wortman J.R."/>
            <person name="Jordar V.S."/>
            <person name="Maiti R."/>
            <person name="Kodira C.D."/>
            <person name="Neafsey D.E."/>
            <person name="Zeng Q."/>
            <person name="Hung C.-Y."/>
            <person name="McMahan C."/>
            <person name="Muszewska A."/>
            <person name="Grynberg M."/>
            <person name="Mandel M.A."/>
            <person name="Kellner E.M."/>
            <person name="Barker B.M."/>
            <person name="Galgiani J.N."/>
            <person name="Orbach M.J."/>
            <person name="Kirkland T.N."/>
            <person name="Cole G.T."/>
            <person name="Henn M.R."/>
            <person name="Birren B.W."/>
            <person name="Taylor J.W."/>
        </authorList>
    </citation>
    <scope>NUCLEOTIDE SEQUENCE [LARGE SCALE GENOMIC DNA]</scope>
    <source>
        <strain>NAm1 / WU24</strain>
    </source>
</reference>
<accession>A6QYP4</accession>
<organism>
    <name type="scientific">Ajellomyces capsulatus (strain NAm1 / WU24)</name>
    <name type="common">Darling's disease fungus</name>
    <name type="synonym">Histoplasma capsulatum</name>
    <dbReference type="NCBI Taxonomy" id="2059318"/>
    <lineage>
        <taxon>Eukaryota</taxon>
        <taxon>Fungi</taxon>
        <taxon>Dikarya</taxon>
        <taxon>Ascomycota</taxon>
        <taxon>Pezizomycotina</taxon>
        <taxon>Eurotiomycetes</taxon>
        <taxon>Eurotiomycetidae</taxon>
        <taxon>Onygenales</taxon>
        <taxon>Ajellomycetaceae</taxon>
        <taxon>Histoplasma</taxon>
    </lineage>
</organism>
<comment type="function">
    <text evidence="1">Component of the ERMES/MDM complex, which serves as a molecular tether to connect the endoplasmic reticulum and mitochondria. Components of this complex are involved in the control of mitochondrial shape and protein biogenesis and may function in phospholipid exchange. MDM10 is involved in the late assembly steps of the general translocase of the mitochondrial outer membrane (TOM complex). Functions in the TOM40-specific route of the assembly of outer membrane beta-barrel proteins, including the association of TOM40 with the receptor TOM22 and small TOM proteins. Can associate with the SAM(core) complex as well as the MDM12-MMM1 complex, both involved in late steps of the major beta-barrel assembly pathway, that is responsible for biogenesis of all outer membrane beta-barrel proteins. May act as a switch that shuttles between both complexes and channels precursor proteins into the TOM40-specific pathway. Plays a role in mitochondrial morphology and in the inheritance of mitochondria.</text>
</comment>
<comment type="subunit">
    <text evidence="1">Component of the ER-mitochondria encounter structure (ERMES) or MDM complex, composed of MMM1, MDM10, MDM12 and MDM34. Associates with the mitochondrial outer membrane sorting assembly machinery SAM(core) complex.</text>
</comment>
<comment type="subcellular location">
    <subcellularLocation>
        <location evidence="1">Mitochondrion outer membrane</location>
        <topology evidence="1">Multi-pass membrane protein</topology>
    </subcellularLocation>
    <text evidence="1">The ERMES/MDM complex localizes to a few discrete foci (around 10 per single cell), that represent mitochondria-endoplasmic reticulum junctions. These foci are often found next to mtDNA nucleoids.</text>
</comment>
<comment type="domain">
    <text>Lacks alpha-helical transmembrane segments, suggesting that it resides in the membrane via beta-sheet conformations similar to those predicted for other outer membrane proteins and porin.</text>
</comment>
<comment type="similarity">
    <text evidence="1">Belongs to the MDM10 family.</text>
</comment>
<evidence type="ECO:0000255" key="1">
    <source>
        <dbReference type="HAMAP-Rule" id="MF_03102"/>
    </source>
</evidence>
<evidence type="ECO:0000256" key="2">
    <source>
        <dbReference type="SAM" id="MobiDB-lite"/>
    </source>
</evidence>
<feature type="chain" id="PRO_0000384157" description="Mitochondrial distribution and morphology protein 10">
    <location>
        <begin position="1"/>
        <end position="467"/>
    </location>
</feature>
<feature type="region of interest" description="Disordered" evidence="2">
    <location>
        <begin position="361"/>
        <end position="393"/>
    </location>
</feature>
<feature type="compositionally biased region" description="Basic and acidic residues" evidence="2">
    <location>
        <begin position="369"/>
        <end position="385"/>
    </location>
</feature>
<sequence>MLDFLDYIQFAFSDASKWNRDNSYSQLTMTANALLDFSTPERLKVNLSSLSTPHFATTYTLGTVGLIDGSISYLFTTVPLRDTPSRGTLIPLRKLVPGYRQISAPSLPPGLPTVDGRDGDLAIGDTQGILKKKPTLLHATLHLPPPTTLTGLFLRRLSPTTQLSLAFCSSRASTPKSAPQAALVTQILHDTGKYSSEFLFSTDNALFGFKGLWNFGPDPRKQNQQGDPARESCRPLLSLLSAGAEAYYSPVSSVVGLSTGLRFTTLPAATESPHFTFPYTLTLTLTPLTGSMSTTYSLLASPNVSFSSRFGFNVYSWESEMVAGCELWRRSSNNRLHDDKSQRDSPLFAVDDLTWARRKMGLPDTAPSRNRECDDLPPPRRDNYHHQRSPHASDSVIKVRVDQSWNIRALWEGRVKELLVSAGVALGPTPRSSLSYASSSAAGGVGAAGGLSSYGWKSVGVSVLYSS</sequence>
<dbReference type="EMBL" id="CH476656">
    <property type="protein sequence ID" value="EDN05898.1"/>
    <property type="molecule type" value="Genomic_DNA"/>
</dbReference>
<dbReference type="SMR" id="A6QYP4"/>
<dbReference type="STRING" id="339724.A6QYP4"/>
<dbReference type="KEGG" id="aje:HCAG_02501"/>
<dbReference type="VEuPathDB" id="FungiDB:HCAG_02501"/>
<dbReference type="HOGENOM" id="CLU_026505_1_0_1"/>
<dbReference type="OMA" id="VPGYRQI"/>
<dbReference type="OrthoDB" id="10184at299071"/>
<dbReference type="Proteomes" id="UP000009297">
    <property type="component" value="Unassembled WGS sequence"/>
</dbReference>
<dbReference type="GO" id="GO:0032865">
    <property type="term" value="C:ERMES complex"/>
    <property type="evidence" value="ECO:0007669"/>
    <property type="project" value="UniProtKB-UniRule"/>
</dbReference>
<dbReference type="GO" id="GO:0001401">
    <property type="term" value="C:SAM complex"/>
    <property type="evidence" value="ECO:0007669"/>
    <property type="project" value="TreeGrafter"/>
</dbReference>
<dbReference type="GO" id="GO:0051654">
    <property type="term" value="P:establishment of mitochondrion localization"/>
    <property type="evidence" value="ECO:0007669"/>
    <property type="project" value="TreeGrafter"/>
</dbReference>
<dbReference type="GO" id="GO:0000002">
    <property type="term" value="P:mitochondrial genome maintenance"/>
    <property type="evidence" value="ECO:0007669"/>
    <property type="project" value="UniProtKB-UniRule"/>
</dbReference>
<dbReference type="GO" id="GO:0070096">
    <property type="term" value="P:mitochondrial outer membrane translocase complex assembly"/>
    <property type="evidence" value="ECO:0007669"/>
    <property type="project" value="UniProtKB-UniRule"/>
</dbReference>
<dbReference type="GO" id="GO:1990456">
    <property type="term" value="P:mitochondrion-endoplasmic reticulum membrane tethering"/>
    <property type="evidence" value="ECO:0007669"/>
    <property type="project" value="UniProtKB-UniRule"/>
</dbReference>
<dbReference type="GO" id="GO:0015914">
    <property type="term" value="P:phospholipid transport"/>
    <property type="evidence" value="ECO:0007669"/>
    <property type="project" value="TreeGrafter"/>
</dbReference>
<dbReference type="GO" id="GO:0045040">
    <property type="term" value="P:protein insertion into mitochondrial outer membrane"/>
    <property type="evidence" value="ECO:0007669"/>
    <property type="project" value="UniProtKB-UniRule"/>
</dbReference>
<dbReference type="HAMAP" id="MF_03102">
    <property type="entry name" value="Mdm10"/>
    <property type="match status" value="1"/>
</dbReference>
<dbReference type="InterPro" id="IPR027539">
    <property type="entry name" value="Mdm10"/>
</dbReference>
<dbReference type="PANTHER" id="PTHR28035">
    <property type="entry name" value="MITOCHONDRIAL DISTRIBUTION AND MORPHOLOGY PROTEIN 10"/>
    <property type="match status" value="1"/>
</dbReference>
<dbReference type="PANTHER" id="PTHR28035:SF1">
    <property type="entry name" value="MITOCHONDRIAL DISTRIBUTION AND MORPHOLOGY PROTEIN 10"/>
    <property type="match status" value="1"/>
</dbReference>
<dbReference type="Pfam" id="PF12519">
    <property type="entry name" value="MDM10"/>
    <property type="match status" value="1"/>
</dbReference>